<evidence type="ECO:0000255" key="1">
    <source>
        <dbReference type="HAMAP-Rule" id="MF_00651"/>
    </source>
</evidence>
<comment type="function">
    <text evidence="1">Could be a nuclease involved in processing of the 5'-end of pre-16S rRNA.</text>
</comment>
<comment type="subcellular location">
    <subcellularLocation>
        <location evidence="1">Cytoplasm</location>
    </subcellularLocation>
</comment>
<comment type="similarity">
    <text evidence="1">Belongs to the YqgF nuclease family.</text>
</comment>
<protein>
    <recommendedName>
        <fullName evidence="1">Putative pre-16S rRNA nuclease</fullName>
        <ecNumber evidence="1">3.1.-.-</ecNumber>
    </recommendedName>
</protein>
<dbReference type="EC" id="3.1.-.-" evidence="1"/>
<dbReference type="EMBL" id="AM180355">
    <property type="protein sequence ID" value="CAJ68141.1"/>
    <property type="molecule type" value="Genomic_DNA"/>
</dbReference>
<dbReference type="RefSeq" id="YP_001087779.1">
    <property type="nucleotide sequence ID" value="NC_009089.1"/>
</dbReference>
<dbReference type="SMR" id="Q18BF1"/>
<dbReference type="STRING" id="272563.CD630_12850"/>
<dbReference type="EnsemblBacteria" id="CAJ68141">
    <property type="protein sequence ID" value="CAJ68141"/>
    <property type="gene ID" value="CD630_12850"/>
</dbReference>
<dbReference type="KEGG" id="cdf:CD630_12850"/>
<dbReference type="KEGG" id="pdc:CDIF630_01439"/>
<dbReference type="PATRIC" id="fig|272563.120.peg.1343"/>
<dbReference type="eggNOG" id="COG0816">
    <property type="taxonomic scope" value="Bacteria"/>
</dbReference>
<dbReference type="OrthoDB" id="9796140at2"/>
<dbReference type="PhylomeDB" id="Q18BF1"/>
<dbReference type="BioCyc" id="PDIF272563:G12WB-1419-MONOMER"/>
<dbReference type="Proteomes" id="UP000001978">
    <property type="component" value="Chromosome"/>
</dbReference>
<dbReference type="GO" id="GO:0005829">
    <property type="term" value="C:cytosol"/>
    <property type="evidence" value="ECO:0007669"/>
    <property type="project" value="TreeGrafter"/>
</dbReference>
<dbReference type="GO" id="GO:0004518">
    <property type="term" value="F:nuclease activity"/>
    <property type="evidence" value="ECO:0007669"/>
    <property type="project" value="UniProtKB-KW"/>
</dbReference>
<dbReference type="GO" id="GO:0000967">
    <property type="term" value="P:rRNA 5'-end processing"/>
    <property type="evidence" value="ECO:0007669"/>
    <property type="project" value="UniProtKB-UniRule"/>
</dbReference>
<dbReference type="CDD" id="cd16964">
    <property type="entry name" value="YqgF"/>
    <property type="match status" value="1"/>
</dbReference>
<dbReference type="Gene3D" id="3.30.420.140">
    <property type="entry name" value="YqgF/RNase H-like domain"/>
    <property type="match status" value="1"/>
</dbReference>
<dbReference type="HAMAP" id="MF_00651">
    <property type="entry name" value="Nuclease_YqgF"/>
    <property type="match status" value="1"/>
</dbReference>
<dbReference type="InterPro" id="IPR012337">
    <property type="entry name" value="RNaseH-like_sf"/>
</dbReference>
<dbReference type="InterPro" id="IPR005227">
    <property type="entry name" value="YqgF"/>
</dbReference>
<dbReference type="InterPro" id="IPR006641">
    <property type="entry name" value="YqgF/RNaseH-like_dom"/>
</dbReference>
<dbReference type="InterPro" id="IPR037027">
    <property type="entry name" value="YqgF/RNaseH-like_dom_sf"/>
</dbReference>
<dbReference type="NCBIfam" id="TIGR00250">
    <property type="entry name" value="RNAse_H_YqgF"/>
    <property type="match status" value="1"/>
</dbReference>
<dbReference type="PANTHER" id="PTHR33317">
    <property type="entry name" value="POLYNUCLEOTIDYL TRANSFERASE, RIBONUCLEASE H-LIKE SUPERFAMILY PROTEIN"/>
    <property type="match status" value="1"/>
</dbReference>
<dbReference type="PANTHER" id="PTHR33317:SF4">
    <property type="entry name" value="POLYNUCLEOTIDYL TRANSFERASE, RIBONUCLEASE H-LIKE SUPERFAMILY PROTEIN"/>
    <property type="match status" value="1"/>
</dbReference>
<dbReference type="Pfam" id="PF03652">
    <property type="entry name" value="RuvX"/>
    <property type="match status" value="1"/>
</dbReference>
<dbReference type="SMART" id="SM00732">
    <property type="entry name" value="YqgFc"/>
    <property type="match status" value="1"/>
</dbReference>
<dbReference type="SUPFAM" id="SSF53098">
    <property type="entry name" value="Ribonuclease H-like"/>
    <property type="match status" value="1"/>
</dbReference>
<sequence>MLDGRIMGLDVGDKTIGVAVSDLMGLTAQGVKTIKRVGKKKDIEELKAIIKEKQVNKIVSGLPKNMNGTLGPQGEKVIKFCELVKAETGIDVEFWDERLSTVAAERSLLEADVSRQKRKKVIDMLAAVIILQGYLDFKINS</sequence>
<accession>Q18BF1</accession>
<keyword id="KW-0963">Cytoplasm</keyword>
<keyword id="KW-0378">Hydrolase</keyword>
<keyword id="KW-0540">Nuclease</keyword>
<keyword id="KW-1185">Reference proteome</keyword>
<keyword id="KW-0690">Ribosome biogenesis</keyword>
<proteinExistence type="inferred from homology"/>
<name>YQGF_CLOD6</name>
<reference key="1">
    <citation type="journal article" date="2006" name="Nat. Genet.">
        <title>The multidrug-resistant human pathogen Clostridium difficile has a highly mobile, mosaic genome.</title>
        <authorList>
            <person name="Sebaihia M."/>
            <person name="Wren B.W."/>
            <person name="Mullany P."/>
            <person name="Fairweather N.F."/>
            <person name="Minton N."/>
            <person name="Stabler R."/>
            <person name="Thomson N.R."/>
            <person name="Roberts A.P."/>
            <person name="Cerdeno-Tarraga A.M."/>
            <person name="Wang H."/>
            <person name="Holden M.T.G."/>
            <person name="Wright A."/>
            <person name="Churcher C."/>
            <person name="Quail M.A."/>
            <person name="Baker S."/>
            <person name="Bason N."/>
            <person name="Brooks K."/>
            <person name="Chillingworth T."/>
            <person name="Cronin A."/>
            <person name="Davis P."/>
            <person name="Dowd L."/>
            <person name="Fraser A."/>
            <person name="Feltwell T."/>
            <person name="Hance Z."/>
            <person name="Holroyd S."/>
            <person name="Jagels K."/>
            <person name="Moule S."/>
            <person name="Mungall K."/>
            <person name="Price C."/>
            <person name="Rabbinowitsch E."/>
            <person name="Sharp S."/>
            <person name="Simmonds M."/>
            <person name="Stevens K."/>
            <person name="Unwin L."/>
            <person name="Whithead S."/>
            <person name="Dupuy B."/>
            <person name="Dougan G."/>
            <person name="Barrell B."/>
            <person name="Parkhill J."/>
        </authorList>
    </citation>
    <scope>NUCLEOTIDE SEQUENCE [LARGE SCALE GENOMIC DNA]</scope>
    <source>
        <strain>630</strain>
    </source>
</reference>
<gene>
    <name type="ordered locus">CD630_12850</name>
</gene>
<organism>
    <name type="scientific">Clostridioides difficile (strain 630)</name>
    <name type="common">Peptoclostridium difficile</name>
    <dbReference type="NCBI Taxonomy" id="272563"/>
    <lineage>
        <taxon>Bacteria</taxon>
        <taxon>Bacillati</taxon>
        <taxon>Bacillota</taxon>
        <taxon>Clostridia</taxon>
        <taxon>Peptostreptococcales</taxon>
        <taxon>Peptostreptococcaceae</taxon>
        <taxon>Clostridioides</taxon>
    </lineage>
</organism>
<feature type="chain" id="PRO_0000257520" description="Putative pre-16S rRNA nuclease">
    <location>
        <begin position="1"/>
        <end position="141"/>
    </location>
</feature>